<dbReference type="EC" id="2.8.4.4" evidence="1"/>
<dbReference type="EMBL" id="BA000022">
    <property type="protein sequence ID" value="BAA10555.1"/>
    <property type="molecule type" value="Genomic_DNA"/>
</dbReference>
<dbReference type="PIR" id="S76611">
    <property type="entry name" value="S76611"/>
</dbReference>
<dbReference type="SMR" id="Q55803"/>
<dbReference type="STRING" id="1148.gene:10500059"/>
<dbReference type="PaxDb" id="1148-1001718"/>
<dbReference type="EnsemblBacteria" id="BAA10555">
    <property type="protein sequence ID" value="BAA10555"/>
    <property type="gene ID" value="BAA10555"/>
</dbReference>
<dbReference type="KEGG" id="syn:slr0082"/>
<dbReference type="eggNOG" id="COG0621">
    <property type="taxonomic scope" value="Bacteria"/>
</dbReference>
<dbReference type="InParanoid" id="Q55803"/>
<dbReference type="PhylomeDB" id="Q55803"/>
<dbReference type="Proteomes" id="UP000001425">
    <property type="component" value="Chromosome"/>
</dbReference>
<dbReference type="GO" id="GO:0005829">
    <property type="term" value="C:cytosol"/>
    <property type="evidence" value="ECO:0000318"/>
    <property type="project" value="GO_Central"/>
</dbReference>
<dbReference type="GO" id="GO:0051539">
    <property type="term" value="F:4 iron, 4 sulfur cluster binding"/>
    <property type="evidence" value="ECO:0000318"/>
    <property type="project" value="GO_Central"/>
</dbReference>
<dbReference type="GO" id="GO:0046872">
    <property type="term" value="F:metal ion binding"/>
    <property type="evidence" value="ECO:0007669"/>
    <property type="project" value="UniProtKB-KW"/>
</dbReference>
<dbReference type="GO" id="GO:0035597">
    <property type="term" value="F:N6-isopentenyladenosine methylthiotransferase activity"/>
    <property type="evidence" value="ECO:0000318"/>
    <property type="project" value="GO_Central"/>
</dbReference>
<dbReference type="GO" id="GO:0103039">
    <property type="term" value="F:protein methylthiotransferase activity"/>
    <property type="evidence" value="ECO:0007669"/>
    <property type="project" value="UniProtKB-EC"/>
</dbReference>
<dbReference type="GO" id="GO:0035600">
    <property type="term" value="P:tRNA methylthiolation"/>
    <property type="evidence" value="ECO:0000318"/>
    <property type="project" value="GO_Central"/>
</dbReference>
<dbReference type="CDD" id="cd01335">
    <property type="entry name" value="Radical_SAM"/>
    <property type="match status" value="1"/>
</dbReference>
<dbReference type="FunFam" id="2.40.50.140:FF:000210">
    <property type="entry name" value="Ribosomal protein S12 methylthiotransferase RimO"/>
    <property type="match status" value="1"/>
</dbReference>
<dbReference type="FunFam" id="3.40.50.12160:FF:000002">
    <property type="entry name" value="Ribosomal protein S12 methylthiotransferase RimO"/>
    <property type="match status" value="1"/>
</dbReference>
<dbReference type="FunFam" id="3.80.30.20:FF:000001">
    <property type="entry name" value="tRNA-2-methylthio-N(6)-dimethylallyladenosine synthase 2"/>
    <property type="match status" value="1"/>
</dbReference>
<dbReference type="Gene3D" id="3.40.50.12160">
    <property type="entry name" value="Methylthiotransferase, N-terminal domain"/>
    <property type="match status" value="1"/>
</dbReference>
<dbReference type="Gene3D" id="2.40.50.140">
    <property type="entry name" value="Nucleic acid-binding proteins"/>
    <property type="match status" value="1"/>
</dbReference>
<dbReference type="Gene3D" id="3.80.30.20">
    <property type="entry name" value="tm_1862 like domain"/>
    <property type="match status" value="1"/>
</dbReference>
<dbReference type="HAMAP" id="MF_01865">
    <property type="entry name" value="MTTase_RimO"/>
    <property type="match status" value="1"/>
</dbReference>
<dbReference type="InterPro" id="IPR006638">
    <property type="entry name" value="Elp3/MiaA/NifB-like_rSAM"/>
</dbReference>
<dbReference type="InterPro" id="IPR005839">
    <property type="entry name" value="Methylthiotransferase"/>
</dbReference>
<dbReference type="InterPro" id="IPR020612">
    <property type="entry name" value="Methylthiotransferase_CS"/>
</dbReference>
<dbReference type="InterPro" id="IPR013848">
    <property type="entry name" value="Methylthiotransferase_N"/>
</dbReference>
<dbReference type="InterPro" id="IPR038135">
    <property type="entry name" value="Methylthiotransferase_N_sf"/>
</dbReference>
<dbReference type="InterPro" id="IPR012340">
    <property type="entry name" value="NA-bd_OB-fold"/>
</dbReference>
<dbReference type="InterPro" id="IPR005840">
    <property type="entry name" value="Ribosomal_uS12_MeSTrfase_RimO"/>
</dbReference>
<dbReference type="InterPro" id="IPR007197">
    <property type="entry name" value="rSAM"/>
</dbReference>
<dbReference type="InterPro" id="IPR023404">
    <property type="entry name" value="rSAM_horseshoe"/>
</dbReference>
<dbReference type="InterPro" id="IPR002792">
    <property type="entry name" value="TRAM_dom"/>
</dbReference>
<dbReference type="NCBIfam" id="TIGR01125">
    <property type="entry name" value="30S ribosomal protein S12 methylthiotransferase RimO"/>
    <property type="match status" value="1"/>
</dbReference>
<dbReference type="NCBIfam" id="TIGR00089">
    <property type="entry name" value="MiaB/RimO family radical SAM methylthiotransferase"/>
    <property type="match status" value="1"/>
</dbReference>
<dbReference type="PANTHER" id="PTHR43837">
    <property type="entry name" value="RIBOSOMAL PROTEIN S12 METHYLTHIOTRANSFERASE RIMO"/>
    <property type="match status" value="1"/>
</dbReference>
<dbReference type="PANTHER" id="PTHR43837:SF1">
    <property type="entry name" value="RIBOSOMAL PROTEIN US12 METHYLTHIOTRANSFERASE RIMO"/>
    <property type="match status" value="1"/>
</dbReference>
<dbReference type="Pfam" id="PF04055">
    <property type="entry name" value="Radical_SAM"/>
    <property type="match status" value="1"/>
</dbReference>
<dbReference type="Pfam" id="PF18693">
    <property type="entry name" value="TRAM_2"/>
    <property type="match status" value="1"/>
</dbReference>
<dbReference type="Pfam" id="PF00919">
    <property type="entry name" value="UPF0004"/>
    <property type="match status" value="1"/>
</dbReference>
<dbReference type="SFLD" id="SFLDG01082">
    <property type="entry name" value="B12-binding_domain_containing"/>
    <property type="match status" value="1"/>
</dbReference>
<dbReference type="SFLD" id="SFLDS00029">
    <property type="entry name" value="Radical_SAM"/>
    <property type="match status" value="1"/>
</dbReference>
<dbReference type="SFLD" id="SFLDF00274">
    <property type="entry name" value="ribosomal_protein_S12_methylth"/>
    <property type="match status" value="1"/>
</dbReference>
<dbReference type="SMART" id="SM00729">
    <property type="entry name" value="Elp3"/>
    <property type="match status" value="1"/>
</dbReference>
<dbReference type="SUPFAM" id="SSF102114">
    <property type="entry name" value="Radical SAM enzymes"/>
    <property type="match status" value="1"/>
</dbReference>
<dbReference type="PROSITE" id="PS51449">
    <property type="entry name" value="MTTASE_N"/>
    <property type="match status" value="1"/>
</dbReference>
<dbReference type="PROSITE" id="PS01278">
    <property type="entry name" value="MTTASE_RADICAL"/>
    <property type="match status" value="1"/>
</dbReference>
<dbReference type="PROSITE" id="PS51918">
    <property type="entry name" value="RADICAL_SAM"/>
    <property type="match status" value="1"/>
</dbReference>
<dbReference type="PROSITE" id="PS50926">
    <property type="entry name" value="TRAM"/>
    <property type="match status" value="1"/>
</dbReference>
<protein>
    <recommendedName>
        <fullName evidence="1">Ribosomal protein uS12 methylthiotransferase RimO</fullName>
        <shortName evidence="1">uS12 MTTase</shortName>
        <shortName evidence="1">uS12 methylthiotransferase</shortName>
        <ecNumber evidence="1">2.8.4.4</ecNumber>
    </recommendedName>
    <alternativeName>
        <fullName evidence="1">Ribosomal protein uS12 (aspartate-C(3))-methylthiotransferase</fullName>
    </alternativeName>
    <alternativeName>
        <fullName evidence="1">Ribosome maturation factor RimO</fullName>
    </alternativeName>
</protein>
<organism>
    <name type="scientific">Synechocystis sp. (strain ATCC 27184 / PCC 6803 / Kazusa)</name>
    <dbReference type="NCBI Taxonomy" id="1111708"/>
    <lineage>
        <taxon>Bacteria</taxon>
        <taxon>Bacillati</taxon>
        <taxon>Cyanobacteriota</taxon>
        <taxon>Cyanophyceae</taxon>
        <taxon>Synechococcales</taxon>
        <taxon>Merismopediaceae</taxon>
        <taxon>Synechocystis</taxon>
    </lineage>
</organism>
<comment type="function">
    <text evidence="1">Catalyzes the methylthiolation of an aspartic acid residue of ribosomal protein uS12.</text>
</comment>
<comment type="catalytic activity">
    <reaction evidence="1">
        <text>L-aspartate(89)-[ribosomal protein uS12]-hydrogen + (sulfur carrier)-SH + AH2 + 2 S-adenosyl-L-methionine = 3-methylsulfanyl-L-aspartate(89)-[ribosomal protein uS12]-hydrogen + (sulfur carrier)-H + 5'-deoxyadenosine + L-methionine + A + S-adenosyl-L-homocysteine + 2 H(+)</text>
        <dbReference type="Rhea" id="RHEA:37087"/>
        <dbReference type="Rhea" id="RHEA-COMP:10460"/>
        <dbReference type="Rhea" id="RHEA-COMP:10461"/>
        <dbReference type="Rhea" id="RHEA-COMP:14737"/>
        <dbReference type="Rhea" id="RHEA-COMP:14739"/>
        <dbReference type="ChEBI" id="CHEBI:13193"/>
        <dbReference type="ChEBI" id="CHEBI:15378"/>
        <dbReference type="ChEBI" id="CHEBI:17319"/>
        <dbReference type="ChEBI" id="CHEBI:17499"/>
        <dbReference type="ChEBI" id="CHEBI:29917"/>
        <dbReference type="ChEBI" id="CHEBI:29961"/>
        <dbReference type="ChEBI" id="CHEBI:57844"/>
        <dbReference type="ChEBI" id="CHEBI:57856"/>
        <dbReference type="ChEBI" id="CHEBI:59789"/>
        <dbReference type="ChEBI" id="CHEBI:64428"/>
        <dbReference type="ChEBI" id="CHEBI:73599"/>
        <dbReference type="EC" id="2.8.4.4"/>
    </reaction>
</comment>
<comment type="cofactor">
    <cofactor evidence="1">
        <name>[4Fe-4S] cluster</name>
        <dbReference type="ChEBI" id="CHEBI:49883"/>
    </cofactor>
    <text evidence="1">Binds 2 [4Fe-4S] clusters. One cluster is coordinated with 3 cysteines and an exchangeable S-adenosyl-L-methionine.</text>
</comment>
<comment type="subcellular location">
    <subcellularLocation>
        <location evidence="1">Cytoplasm</location>
    </subcellularLocation>
</comment>
<comment type="induction">
    <text evidence="3">Part of the rimO-crhR operon; upon a cold shift from 30 to 20 degrees Celsius, expression increases to a peak at 20 minutes, then decreases. In a crhR deletion, mRNA rises to high level and remains high for at least 2 hours; de novo transcription is wild-type, suggesting CrhR is involved in wild-type regulation of mRNA levels. The rimO-crhR transcript is processed between the 2 genes by RNase E (rne).</text>
</comment>
<comment type="similarity">
    <text evidence="1">Belongs to the methylthiotransferase family. RimO subfamily.</text>
</comment>
<reference key="1">
    <citation type="journal article" date="1995" name="DNA Res.">
        <title>Sequence analysis of the genome of the unicellular cyanobacterium Synechocystis sp. strain PCC6803. I. Sequence features in the 1 Mb region from map positions 64% to 92% of the genome.</title>
        <authorList>
            <person name="Kaneko T."/>
            <person name="Tanaka A."/>
            <person name="Sato S."/>
            <person name="Kotani H."/>
            <person name="Sazuka T."/>
            <person name="Miyajima N."/>
            <person name="Sugiura M."/>
            <person name="Tabata S."/>
        </authorList>
    </citation>
    <scope>NUCLEOTIDE SEQUENCE [LARGE SCALE GENOMIC DNA]</scope>
    <source>
        <strain>ATCC 27184 / PCC 6803 / N-1</strain>
    </source>
</reference>
<reference key="2">
    <citation type="journal article" date="1996" name="DNA Res.">
        <title>Sequence analysis of the genome of the unicellular cyanobacterium Synechocystis sp. strain PCC6803. II. Sequence determination of the entire genome and assignment of potential protein-coding regions.</title>
        <authorList>
            <person name="Kaneko T."/>
            <person name="Sato S."/>
            <person name="Kotani H."/>
            <person name="Tanaka A."/>
            <person name="Asamizu E."/>
            <person name="Nakamura Y."/>
            <person name="Miyajima N."/>
            <person name="Hirosawa M."/>
            <person name="Sugiura M."/>
            <person name="Sasamoto S."/>
            <person name="Kimura T."/>
            <person name="Hosouchi T."/>
            <person name="Matsuno A."/>
            <person name="Muraki A."/>
            <person name="Nakazaki N."/>
            <person name="Naruo K."/>
            <person name="Okumura S."/>
            <person name="Shimpo S."/>
            <person name="Takeuchi C."/>
            <person name="Wada T."/>
            <person name="Watanabe A."/>
            <person name="Yamada M."/>
            <person name="Yasuda M."/>
            <person name="Tabata S."/>
        </authorList>
    </citation>
    <scope>NUCLEOTIDE SEQUENCE [LARGE SCALE GENOMIC DNA]</scope>
    <source>
        <strain>ATCC 27184 / PCC 6803 / Kazusa</strain>
    </source>
</reference>
<reference key="3">
    <citation type="journal article" date="2020" name="J. Biol. Chem.">
        <title>RNA helicase-regulated processing of the Synechocystis rimO-crhR operon results in differential cistron expression and accumulation of two sRNAs.</title>
        <authorList>
            <person name="Rosana A.R.R."/>
            <person name="Whitford D.S."/>
            <person name="Migur A."/>
            <person name="Steglich C."/>
            <person name="Kujat-Choy S.L."/>
            <person name="Hess W.R."/>
            <person name="Owttrim G.W."/>
        </authorList>
    </citation>
    <scope>INDUCTION</scope>
    <source>
        <strain>ATCC 27184 / PCC 6803 / Kazusa</strain>
    </source>
</reference>
<accession>Q55803</accession>
<gene>
    <name evidence="1" type="primary">rimO</name>
    <name type="ordered locus">slr0082</name>
</gene>
<name>RIMO_SYNY3</name>
<proteinExistence type="evidence at transcript level"/>
<evidence type="ECO:0000255" key="1">
    <source>
        <dbReference type="HAMAP-Rule" id="MF_01865"/>
    </source>
</evidence>
<evidence type="ECO:0000255" key="2">
    <source>
        <dbReference type="PROSITE-ProRule" id="PRU01266"/>
    </source>
</evidence>
<evidence type="ECO:0000269" key="3">
    <source>
    </source>
</evidence>
<feature type="chain" id="PRO_0000141752" description="Ribosomal protein uS12 methylthiotransferase RimO">
    <location>
        <begin position="1"/>
        <end position="443"/>
    </location>
</feature>
<feature type="domain" description="MTTase N-terminal" evidence="1">
    <location>
        <begin position="5"/>
        <end position="116"/>
    </location>
</feature>
<feature type="domain" description="Radical SAM core" evidence="2">
    <location>
        <begin position="140"/>
        <end position="369"/>
    </location>
</feature>
<feature type="domain" description="TRAM" evidence="1">
    <location>
        <begin position="372"/>
        <end position="438"/>
    </location>
</feature>
<feature type="binding site" evidence="1">
    <location>
        <position position="14"/>
    </location>
    <ligand>
        <name>[4Fe-4S] cluster</name>
        <dbReference type="ChEBI" id="CHEBI:49883"/>
        <label>1</label>
    </ligand>
</feature>
<feature type="binding site" evidence="1">
    <location>
        <position position="50"/>
    </location>
    <ligand>
        <name>[4Fe-4S] cluster</name>
        <dbReference type="ChEBI" id="CHEBI:49883"/>
        <label>1</label>
    </ligand>
</feature>
<feature type="binding site" evidence="1">
    <location>
        <position position="79"/>
    </location>
    <ligand>
        <name>[4Fe-4S] cluster</name>
        <dbReference type="ChEBI" id="CHEBI:49883"/>
        <label>1</label>
    </ligand>
</feature>
<feature type="binding site" evidence="1">
    <location>
        <position position="154"/>
    </location>
    <ligand>
        <name>[4Fe-4S] cluster</name>
        <dbReference type="ChEBI" id="CHEBI:49883"/>
        <label>2</label>
        <note>4Fe-4S-S-AdoMet</note>
    </ligand>
</feature>
<feature type="binding site" evidence="1">
    <location>
        <position position="158"/>
    </location>
    <ligand>
        <name>[4Fe-4S] cluster</name>
        <dbReference type="ChEBI" id="CHEBI:49883"/>
        <label>2</label>
        <note>4Fe-4S-S-AdoMet</note>
    </ligand>
</feature>
<feature type="binding site" evidence="1">
    <location>
        <position position="161"/>
    </location>
    <ligand>
        <name>[4Fe-4S] cluster</name>
        <dbReference type="ChEBI" id="CHEBI:49883"/>
        <label>2</label>
        <note>4Fe-4S-S-AdoMet</note>
    </ligand>
</feature>
<keyword id="KW-0004">4Fe-4S</keyword>
<keyword id="KW-0963">Cytoplasm</keyword>
<keyword id="KW-0408">Iron</keyword>
<keyword id="KW-0411">Iron-sulfur</keyword>
<keyword id="KW-0479">Metal-binding</keyword>
<keyword id="KW-1185">Reference proteome</keyword>
<keyword id="KW-0949">S-adenosyl-L-methionine</keyword>
<keyword id="KW-0808">Transferase</keyword>
<sequence length="443" mass="49362">MGQTPTIAINHLGCEKNRIDSEHMLGLLVEAGYQVDANEELADYVIVNTCSFIQDARQESVRTLVELAEAKKKIVISGCLAQHFQEQLLEEIPEAVAVVGTGDYQNIVDIIRRTEQGQRVKAISPNPSFIADENLPRYRTTNEAIAYLRVAEGCDYRCAFCIIPQLRGKQRSRPIESIVAEAEQLASQGVKELILISQITTNYGLDLYGEPKLAELLQALGKVDIPWIRIHYAYPTGLTPKVIEAIRDTPNVLPYLDLPLQHSHPDILRAMNRPWQGQVNDDIITRLKTALPDAVLRTTFIVGFPGETEEHFGHLLDFVQRHQFDHVGVFTFSPEEGTAAFDLPNAVPEEVMGDRRDRLMALQQPISAQKNAACLGQTLDVLIEQENPSTGEFIGRSTRFAPEVDGLVYVKGNANLNEIVPVVITATDDYDLYGMTAEEAKVF</sequence>